<organism>
    <name type="scientific">Oryza sativa subsp. japonica</name>
    <name type="common">Rice</name>
    <dbReference type="NCBI Taxonomy" id="39947"/>
    <lineage>
        <taxon>Eukaryota</taxon>
        <taxon>Viridiplantae</taxon>
        <taxon>Streptophyta</taxon>
        <taxon>Embryophyta</taxon>
        <taxon>Tracheophyta</taxon>
        <taxon>Spermatophyta</taxon>
        <taxon>Magnoliopsida</taxon>
        <taxon>Liliopsida</taxon>
        <taxon>Poales</taxon>
        <taxon>Poaceae</taxon>
        <taxon>BOP clade</taxon>
        <taxon>Oryzoideae</taxon>
        <taxon>Oryzeae</taxon>
        <taxon>Oryzinae</taxon>
        <taxon>Oryza</taxon>
        <taxon>Oryza sativa</taxon>
    </lineage>
</organism>
<feature type="chain" id="PRO_0000455670" description="1-aminocyclopropane-1-carboxylate synthase 3">
    <location>
        <begin position="1"/>
        <end position="452"/>
    </location>
</feature>
<feature type="modified residue" description="N6-(pyridoxal phosphate)lysine" evidence="1">
    <location>
        <position position="283"/>
    </location>
</feature>
<evidence type="ECO:0000250" key="1">
    <source>
        <dbReference type="UniProtKB" id="P37821"/>
    </source>
</evidence>
<evidence type="ECO:0000269" key="2">
    <source>
    </source>
</evidence>
<evidence type="ECO:0000269" key="3">
    <source>
    </source>
</evidence>
<evidence type="ECO:0000303" key="4">
    <source>
    </source>
</evidence>
<evidence type="ECO:0000305" key="5"/>
<evidence type="ECO:0000312" key="6">
    <source>
        <dbReference type="EMBL" id="AAU10812.1"/>
    </source>
</evidence>
<evidence type="ECO:0000312" key="7">
    <source>
        <dbReference type="EMBL" id="AAV59454.1"/>
    </source>
</evidence>
<evidence type="ECO:0000312" key="8">
    <source>
        <dbReference type="EMBL" id="BAS92679.1"/>
    </source>
</evidence>
<evidence type="ECO:0000312" key="9">
    <source>
        <dbReference type="EMBL" id="EEE62644.1"/>
    </source>
</evidence>
<gene>
    <name evidence="4" type="primary">ACS3</name>
    <name evidence="5" type="synonym">ACC3</name>
    <name evidence="8" type="ordered locus">Os05g0196600</name>
    <name evidence="5" type="ordered locus">LOC_Os05g10780</name>
    <name evidence="9" type="ORF">OsJ_17447</name>
    <name evidence="7" type="ORF">P0617H07.9</name>
    <name evidence="6" type="ORF">P0636E04.1</name>
</gene>
<reference key="1">
    <citation type="journal article" date="2005" name="Mol. Genet. Genomics">
        <title>A fine physical map of the rice chromosome 5.</title>
        <authorList>
            <person name="Cheng C.-H."/>
            <person name="Chung M.C."/>
            <person name="Liu S.-M."/>
            <person name="Chen S.-K."/>
            <person name="Kao F.Y."/>
            <person name="Lin S.-J."/>
            <person name="Hsiao S.-H."/>
            <person name="Tseng I.C."/>
            <person name="Hsing Y.-I.C."/>
            <person name="Wu H.-P."/>
            <person name="Chen C.-S."/>
            <person name="Shaw J.-F."/>
            <person name="Wu J."/>
            <person name="Matsumoto T."/>
            <person name="Sasaki T."/>
            <person name="Chen H.-C."/>
            <person name="Chow T.-Y."/>
        </authorList>
    </citation>
    <scope>NUCLEOTIDE SEQUENCE [LARGE SCALE GENOMIC DNA]</scope>
    <source>
        <strain>cv. Nipponbare</strain>
    </source>
</reference>
<reference key="2">
    <citation type="journal article" date="2005" name="Nature">
        <title>The map-based sequence of the rice genome.</title>
        <authorList>
            <consortium name="International rice genome sequencing project (IRGSP)"/>
        </authorList>
    </citation>
    <scope>NUCLEOTIDE SEQUENCE [LARGE SCALE GENOMIC DNA]</scope>
    <source>
        <strain>cv. Nipponbare</strain>
    </source>
</reference>
<reference key="3">
    <citation type="journal article" date="2013" name="Rice">
        <title>Improvement of the Oryza sativa Nipponbare reference genome using next generation sequence and optical map data.</title>
        <authorList>
            <person name="Kawahara Y."/>
            <person name="de la Bastide M."/>
            <person name="Hamilton J.P."/>
            <person name="Kanamori H."/>
            <person name="McCombie W.R."/>
            <person name="Ouyang S."/>
            <person name="Schwartz D.C."/>
            <person name="Tanaka T."/>
            <person name="Wu J."/>
            <person name="Zhou S."/>
            <person name="Childs K.L."/>
            <person name="Davidson R.M."/>
            <person name="Lin H."/>
            <person name="Quesada-Ocampo L."/>
            <person name="Vaillancourt B."/>
            <person name="Sakai H."/>
            <person name="Lee S.S."/>
            <person name="Kim J."/>
            <person name="Numa H."/>
            <person name="Itoh T."/>
            <person name="Buell C.R."/>
            <person name="Matsumoto T."/>
        </authorList>
    </citation>
    <scope>GENOME REANNOTATION</scope>
    <source>
        <strain>cv. Nipponbare</strain>
    </source>
</reference>
<reference key="4">
    <citation type="journal article" date="2005" name="PLoS Biol.">
        <title>The genomes of Oryza sativa: a history of duplications.</title>
        <authorList>
            <person name="Yu J."/>
            <person name="Wang J."/>
            <person name="Lin W."/>
            <person name="Li S."/>
            <person name="Li H."/>
            <person name="Zhou J."/>
            <person name="Ni P."/>
            <person name="Dong W."/>
            <person name="Hu S."/>
            <person name="Zeng C."/>
            <person name="Zhang J."/>
            <person name="Zhang Y."/>
            <person name="Li R."/>
            <person name="Xu Z."/>
            <person name="Li S."/>
            <person name="Li X."/>
            <person name="Zheng H."/>
            <person name="Cong L."/>
            <person name="Lin L."/>
            <person name="Yin J."/>
            <person name="Geng J."/>
            <person name="Li G."/>
            <person name="Shi J."/>
            <person name="Liu J."/>
            <person name="Lv H."/>
            <person name="Li J."/>
            <person name="Wang J."/>
            <person name="Deng Y."/>
            <person name="Ran L."/>
            <person name="Shi X."/>
            <person name="Wang X."/>
            <person name="Wu Q."/>
            <person name="Li C."/>
            <person name="Ren X."/>
            <person name="Wang J."/>
            <person name="Wang X."/>
            <person name="Li D."/>
            <person name="Liu D."/>
            <person name="Zhang X."/>
            <person name="Ji Z."/>
            <person name="Zhao W."/>
            <person name="Sun Y."/>
            <person name="Zhang Z."/>
            <person name="Bao J."/>
            <person name="Han Y."/>
            <person name="Dong L."/>
            <person name="Ji J."/>
            <person name="Chen P."/>
            <person name="Wu S."/>
            <person name="Liu J."/>
            <person name="Xiao Y."/>
            <person name="Bu D."/>
            <person name="Tan J."/>
            <person name="Yang L."/>
            <person name="Ye C."/>
            <person name="Zhang J."/>
            <person name="Xu J."/>
            <person name="Zhou Y."/>
            <person name="Yu Y."/>
            <person name="Zhang B."/>
            <person name="Zhuang S."/>
            <person name="Wei H."/>
            <person name="Liu B."/>
            <person name="Lei M."/>
            <person name="Yu H."/>
            <person name="Li Y."/>
            <person name="Xu H."/>
            <person name="Wei S."/>
            <person name="He X."/>
            <person name="Fang L."/>
            <person name="Zhang Z."/>
            <person name="Zhang Y."/>
            <person name="Huang X."/>
            <person name="Su Z."/>
            <person name="Tong W."/>
            <person name="Li J."/>
            <person name="Tong Z."/>
            <person name="Li S."/>
            <person name="Ye J."/>
            <person name="Wang L."/>
            <person name="Fang L."/>
            <person name="Lei T."/>
            <person name="Chen C.-S."/>
            <person name="Chen H.-C."/>
            <person name="Xu Z."/>
            <person name="Li H."/>
            <person name="Huang H."/>
            <person name="Zhang F."/>
            <person name="Xu H."/>
            <person name="Li N."/>
            <person name="Zhao C."/>
            <person name="Li S."/>
            <person name="Dong L."/>
            <person name="Huang Y."/>
            <person name="Li L."/>
            <person name="Xi Y."/>
            <person name="Qi Q."/>
            <person name="Li W."/>
            <person name="Zhang B."/>
            <person name="Hu W."/>
            <person name="Zhang Y."/>
            <person name="Tian X."/>
            <person name="Jiao Y."/>
            <person name="Liang X."/>
            <person name="Jin J."/>
            <person name="Gao L."/>
            <person name="Zheng W."/>
            <person name="Hao B."/>
            <person name="Liu S.-M."/>
            <person name="Wang W."/>
            <person name="Yuan L."/>
            <person name="Cao M."/>
            <person name="McDermott J."/>
            <person name="Samudrala R."/>
            <person name="Wang J."/>
            <person name="Wong G.K.-S."/>
            <person name="Yang H."/>
        </authorList>
    </citation>
    <scope>NUCLEOTIDE SEQUENCE [LARGE SCALE GENOMIC DNA]</scope>
    <source>
        <strain>cv. Nipponbare</strain>
    </source>
</reference>
<reference key="5">
    <citation type="journal article" date="2006" name="Plant Physiol.">
        <title>Contribution of ethylene biosynthesis for resistance to blast fungus infection in young rice plants.</title>
        <authorList>
            <person name="Iwai T."/>
            <person name="Miyasaka A."/>
            <person name="Seo S."/>
            <person name="Ohashi Y."/>
        </authorList>
    </citation>
    <scope>TISSUE SPECIFICITY</scope>
    <scope>NOMENCLATURE</scope>
</reference>
<reference key="6">
    <citation type="journal article" date="2019" name="J. Exp. Bot.">
        <title>Editing of the OsACS locus alters phosphate deficiency-induced adaptive responses in rice seedlings.</title>
        <authorList>
            <person name="Lee H.Y."/>
            <person name="Chen Z."/>
            <person name="Zhang C."/>
            <person name="Yoon G.M."/>
        </authorList>
    </citation>
    <scope>TISSUE SPECIFICITY</scope>
</reference>
<comment type="function">
    <text evidence="1">Catalyzes the formation of 1-aminocyclopropane-1-carboxylate, a direct precursor of ethylene in higher plants.</text>
</comment>
<comment type="catalytic activity">
    <reaction evidence="1">
        <text>S-adenosyl-L-methionine = 1-aminocyclopropane-1-carboxylate + S-methyl-5'-thioadenosine + H(+)</text>
        <dbReference type="Rhea" id="RHEA:21744"/>
        <dbReference type="ChEBI" id="CHEBI:15378"/>
        <dbReference type="ChEBI" id="CHEBI:17509"/>
        <dbReference type="ChEBI" id="CHEBI:58360"/>
        <dbReference type="ChEBI" id="CHEBI:59789"/>
        <dbReference type="EC" id="4.4.1.14"/>
    </reaction>
</comment>
<comment type="cofactor">
    <cofactor evidence="1">
        <name>pyridoxal 5'-phosphate</name>
        <dbReference type="ChEBI" id="CHEBI:597326"/>
    </cofactor>
</comment>
<comment type="pathway">
    <text evidence="5">Alkene biosynthesis; ethylene biosynthesis via S-adenosyl-L-methionine; ethylene from S-adenosyl-L-methionine: step 1/2.</text>
</comment>
<comment type="tissue specificity">
    <text evidence="2 3">Expressed in leaves (PubMed:17012402). Expressed in roots and leaf blades (PubMed:30810167). Expressed at low levels in leaf sheaths and shoot bases (PubMed:30810167).</text>
</comment>
<comment type="similarity">
    <text evidence="5">Belongs to the class-I pyridoxal-phosphate-dependent aminotransferase family.</text>
</comment>
<comment type="sequence caution" evidence="5">
    <conflict type="erroneous initiation">
        <sequence resource="EMBL-CDS" id="AAU10812"/>
    </conflict>
    <text>Truncated N-terminus.</text>
</comment>
<comment type="sequence caution" evidence="5">
    <conflict type="erroneous initiation">
        <sequence resource="EMBL-CDS" id="AAV59454"/>
    </conflict>
    <text>Truncated N-terminus.</text>
</comment>
<comment type="sequence caution" evidence="5">
    <conflict type="erroneous initiation">
        <sequence resource="EMBL-CDS" id="EEE62644"/>
    </conflict>
    <text>Truncated N-terminus.</text>
</comment>
<dbReference type="EC" id="4.4.1.14" evidence="1"/>
<dbReference type="EMBL" id="AC132493">
    <property type="protein sequence ID" value="AAU10812.1"/>
    <property type="status" value="ALT_INIT"/>
    <property type="molecule type" value="Genomic_DNA"/>
</dbReference>
<dbReference type="EMBL" id="AC135427">
    <property type="protein sequence ID" value="AAV59454.1"/>
    <property type="status" value="ALT_INIT"/>
    <property type="molecule type" value="Genomic_DNA"/>
</dbReference>
<dbReference type="EMBL" id="AP014961">
    <property type="protein sequence ID" value="BAS92679.1"/>
    <property type="molecule type" value="Genomic_DNA"/>
</dbReference>
<dbReference type="EMBL" id="CM000142">
    <property type="protein sequence ID" value="EEE62644.1"/>
    <property type="status" value="ALT_INIT"/>
    <property type="molecule type" value="Genomic_DNA"/>
</dbReference>
<dbReference type="SMR" id="A0A0P0WIY3"/>
<dbReference type="FunCoup" id="A0A0P0WIY3">
    <property type="interactions" value="302"/>
</dbReference>
<dbReference type="STRING" id="39947.A0A0P0WIY3"/>
<dbReference type="PaxDb" id="39947-A0A0P0WIY3"/>
<dbReference type="EnsemblPlants" id="Os05t0196600-00">
    <property type="protein sequence ID" value="Os05t0196600-00"/>
    <property type="gene ID" value="Os05g0196600"/>
</dbReference>
<dbReference type="GeneID" id="107275928"/>
<dbReference type="Gramene" id="Os05t0196600-00">
    <property type="protein sequence ID" value="Os05t0196600-00"/>
    <property type="gene ID" value="Os05g0196600"/>
</dbReference>
<dbReference type="KEGG" id="osa:107275928"/>
<dbReference type="eggNOG" id="KOG0256">
    <property type="taxonomic scope" value="Eukaryota"/>
</dbReference>
<dbReference type="HOGENOM" id="CLU_017584_1_0_1"/>
<dbReference type="InParanoid" id="A0A0P0WIY3"/>
<dbReference type="OMA" id="HSKTINC"/>
<dbReference type="OrthoDB" id="691673at2759"/>
<dbReference type="PlantReactome" id="R-OSA-1119334">
    <property type="pathway name" value="Ethylene biosynthesis from methionine"/>
</dbReference>
<dbReference type="PlantReactome" id="R-OSA-1119624">
    <property type="pathway name" value="Methionine salvage pathway"/>
</dbReference>
<dbReference type="UniPathway" id="UPA00384">
    <property type="reaction ID" value="UER00562"/>
</dbReference>
<dbReference type="Proteomes" id="UP000000763">
    <property type="component" value="Chromosome 5"/>
</dbReference>
<dbReference type="Proteomes" id="UP000007752">
    <property type="component" value="Chromosome 5"/>
</dbReference>
<dbReference type="Proteomes" id="UP000059680">
    <property type="component" value="Chromosome 5"/>
</dbReference>
<dbReference type="GO" id="GO:0016829">
    <property type="term" value="F:lyase activity"/>
    <property type="evidence" value="ECO:0007669"/>
    <property type="project" value="UniProtKB-KW"/>
</dbReference>
<dbReference type="GO" id="GO:0030170">
    <property type="term" value="F:pyridoxal phosphate binding"/>
    <property type="evidence" value="ECO:0007669"/>
    <property type="project" value="InterPro"/>
</dbReference>
<dbReference type="GO" id="GO:0008483">
    <property type="term" value="F:transaminase activity"/>
    <property type="evidence" value="ECO:0000318"/>
    <property type="project" value="GO_Central"/>
</dbReference>
<dbReference type="GO" id="GO:0006520">
    <property type="term" value="P:amino acid metabolic process"/>
    <property type="evidence" value="ECO:0000318"/>
    <property type="project" value="GO_Central"/>
</dbReference>
<dbReference type="GO" id="GO:0009693">
    <property type="term" value="P:ethylene biosynthetic process"/>
    <property type="evidence" value="ECO:0007669"/>
    <property type="project" value="UniProtKB-UniPathway"/>
</dbReference>
<dbReference type="CDD" id="cd00609">
    <property type="entry name" value="AAT_like"/>
    <property type="match status" value="1"/>
</dbReference>
<dbReference type="Gene3D" id="3.90.1150.10">
    <property type="entry name" value="Aspartate Aminotransferase, domain 1"/>
    <property type="match status" value="1"/>
</dbReference>
<dbReference type="Gene3D" id="3.40.640.10">
    <property type="entry name" value="Type I PLP-dependent aspartate aminotransferase-like (Major domain)"/>
    <property type="match status" value="1"/>
</dbReference>
<dbReference type="InterPro" id="IPR004839">
    <property type="entry name" value="Aminotransferase_I/II_large"/>
</dbReference>
<dbReference type="InterPro" id="IPR050478">
    <property type="entry name" value="Ethylene_sulfur-biosynth"/>
</dbReference>
<dbReference type="InterPro" id="IPR004838">
    <property type="entry name" value="NHTrfase_class1_PyrdxlP-BS"/>
</dbReference>
<dbReference type="InterPro" id="IPR015424">
    <property type="entry name" value="PyrdxlP-dep_Trfase"/>
</dbReference>
<dbReference type="InterPro" id="IPR015421">
    <property type="entry name" value="PyrdxlP-dep_Trfase_major"/>
</dbReference>
<dbReference type="InterPro" id="IPR015422">
    <property type="entry name" value="PyrdxlP-dep_Trfase_small"/>
</dbReference>
<dbReference type="PANTHER" id="PTHR43795:SF45">
    <property type="entry name" value="1-AMINOCYCLOPROPANE-1-CARBOXYLATE SYNTHASE 3"/>
    <property type="match status" value="1"/>
</dbReference>
<dbReference type="PANTHER" id="PTHR43795">
    <property type="entry name" value="BIFUNCTIONAL ASPARTATE AMINOTRANSFERASE AND GLUTAMATE/ASPARTATE-PREPHENATE AMINOTRANSFERASE-RELATED"/>
    <property type="match status" value="1"/>
</dbReference>
<dbReference type="Pfam" id="PF00155">
    <property type="entry name" value="Aminotran_1_2"/>
    <property type="match status" value="1"/>
</dbReference>
<dbReference type="PRINTS" id="PR00753">
    <property type="entry name" value="ACCSYNTHASE"/>
</dbReference>
<dbReference type="SUPFAM" id="SSF53383">
    <property type="entry name" value="PLP-dependent transferases"/>
    <property type="match status" value="1"/>
</dbReference>
<dbReference type="PROSITE" id="PS00105">
    <property type="entry name" value="AA_TRANSFER_CLASS_1"/>
    <property type="match status" value="1"/>
</dbReference>
<proteinExistence type="evidence at transcript level"/>
<keyword id="KW-0266">Ethylene biosynthesis</keyword>
<keyword id="KW-0456">Lyase</keyword>
<keyword id="KW-0663">Pyridoxal phosphate</keyword>
<keyword id="KW-1185">Reference proteome</keyword>
<keyword id="KW-0949">S-adenosyl-L-methionine</keyword>
<sequence length="452" mass="49322">MVGRMLSSPEPTLSTMAMSAAHGEDSPYFAGWRAYDEDPYDPITNPQGVIQMGLAENQVSFDLLEEYMREHPEASDCGAGVRENALFQDYHGLKSFRKAMASFMETIRGGKARFDPDRVVLTAGATAANELLTFILADPGDALLVPTPYYPGFDRDLRWRTGVNIVPVSCDSAAGFQVTAGALRAAYDEAVAAGTRVRGVLITNPSNPLGTTAARGVLEGILDFVARHDMHLISDEIYSGSVFAAPDLVSVAELVDERRRARGGAADAEDIARRVHVVYSLSKDLGLPGFRVGVVYSYNDAVVAAARRMSSFTLVSSQTQRTLAAMLSDAAFAAAYVRSNRDRLRERHARAVAGLRRAGVACLRGANAGLFVWVDMRRLLGDGEATVAGELRLWRRVVAEAKLNISPGSSCHCREPGWFRVCFANMSLETLDVALHRLGCFIKKWEQEQHEN</sequence>
<accession>A0A0P0WIY3</accession>
<accession>Q53WJ0</accession>
<accession>Q688L9</accession>
<protein>
    <recommendedName>
        <fullName evidence="4">1-aminocyclopropane-1-carboxylate synthase 3</fullName>
        <shortName evidence="4">ACC synthase 3</shortName>
        <shortName evidence="4">OsACS3</shortName>
        <ecNumber evidence="1">4.4.1.14</ecNumber>
    </recommendedName>
</protein>
<name>1A13_ORYSJ</name>